<accession>P02498</accession>
<reference key="1">
    <citation type="journal article" date="1977" name="Biochim. Biophys. Acta">
        <title>Primary structures of alpha-crystallin A chains of elephant, whale, hyrax and rhinoceros.</title>
        <authorList>
            <person name="de Jong W.W."/>
            <person name="Nuy-Terwindt E.C."/>
            <person name="Versteeg M."/>
        </authorList>
    </citation>
    <scope>PROTEIN SEQUENCE</scope>
    <scope>ACETYLATION AT MET-1</scope>
</reference>
<reference key="2">
    <citation type="journal article" date="1995" name="J. Mol. Evol.">
        <title>A reassessment of mammalian alpha A-crystallin sequences using DNA sequencing: implications for anthropoid affinities of tarsier.</title>
        <authorList>
            <person name="Jaworski C.J."/>
        </authorList>
    </citation>
    <scope>NUCLEOTIDE SEQUENCE [GENOMIC DNA] OF 121-163</scope>
</reference>
<sequence>MDVTIQHPWFKRALGPFYPSRLFDQFFGEGLFEYDLLPFLSSTISPYYRQSLFRTVLDSGISEVRSDRDQFVILLDVKHFSPEDLTVKVQDDFVEIHGKHNERQDDHGYISREFHRRYRLPSNVDQSALSCSLSADGMLTFCGPKIQSGMDASHSERAIPVSREEKPSSAPSS</sequence>
<proteinExistence type="evidence at protein level"/>
<name>CRYAA_LOXAF</name>
<keyword id="KW-0007">Acetylation</keyword>
<keyword id="KW-0143">Chaperone</keyword>
<keyword id="KW-0963">Cytoplasm</keyword>
<keyword id="KW-0903">Direct protein sequencing</keyword>
<keyword id="KW-1015">Disulfide bond</keyword>
<keyword id="KW-0273">Eye lens protein</keyword>
<keyword id="KW-0325">Glycoprotein</keyword>
<keyword id="KW-0479">Metal-binding</keyword>
<keyword id="KW-0488">Methylation</keyword>
<keyword id="KW-0539">Nucleus</keyword>
<keyword id="KW-0597">Phosphoprotein</keyword>
<keyword id="KW-1185">Reference proteome</keyword>
<keyword id="KW-0862">Zinc</keyword>
<organism>
    <name type="scientific">Loxodonta africana</name>
    <name type="common">African elephant</name>
    <dbReference type="NCBI Taxonomy" id="9785"/>
    <lineage>
        <taxon>Eukaryota</taxon>
        <taxon>Metazoa</taxon>
        <taxon>Chordata</taxon>
        <taxon>Craniata</taxon>
        <taxon>Vertebrata</taxon>
        <taxon>Euteleostomi</taxon>
        <taxon>Mammalia</taxon>
        <taxon>Eutheria</taxon>
        <taxon>Afrotheria</taxon>
        <taxon>Proboscidea</taxon>
        <taxon>Elephantidae</taxon>
        <taxon>Loxodonta</taxon>
    </lineage>
</organism>
<evidence type="ECO:0000250" key="1"/>
<evidence type="ECO:0000250" key="2">
    <source>
        <dbReference type="UniProtKB" id="P02470"/>
    </source>
</evidence>
<evidence type="ECO:0000250" key="3">
    <source>
        <dbReference type="UniProtKB" id="P02489"/>
    </source>
</evidence>
<evidence type="ECO:0000255" key="4">
    <source>
        <dbReference type="PROSITE-ProRule" id="PRU00285"/>
    </source>
</evidence>
<evidence type="ECO:0000256" key="5">
    <source>
        <dbReference type="SAM" id="MobiDB-lite"/>
    </source>
</evidence>
<evidence type="ECO:0000269" key="6">
    <source>
    </source>
</evidence>
<dbReference type="EMBL" id="U24060">
    <property type="protein sequence ID" value="AAA97562.1"/>
    <property type="molecule type" value="Genomic_DNA"/>
</dbReference>
<dbReference type="PIR" id="A02901">
    <property type="entry name" value="CYELAA"/>
</dbReference>
<dbReference type="SMR" id="P02498"/>
<dbReference type="FunCoup" id="P02498">
    <property type="interactions" value="12"/>
</dbReference>
<dbReference type="STRING" id="9785.ENSLAFP00000024223"/>
<dbReference type="GlyCosmos" id="P02498">
    <property type="glycosylation" value="1 site, No reported glycans"/>
</dbReference>
<dbReference type="iPTMnet" id="P02498"/>
<dbReference type="InParanoid" id="P02498"/>
<dbReference type="Proteomes" id="UP000007646">
    <property type="component" value="Unassembled WGS sequence"/>
</dbReference>
<dbReference type="GO" id="GO:0005737">
    <property type="term" value="C:cytoplasm"/>
    <property type="evidence" value="ECO:0000250"/>
    <property type="project" value="UniProtKB"/>
</dbReference>
<dbReference type="GO" id="GO:0005634">
    <property type="term" value="C:nucleus"/>
    <property type="evidence" value="ECO:0000250"/>
    <property type="project" value="UniProtKB"/>
</dbReference>
<dbReference type="GO" id="GO:0046872">
    <property type="term" value="F:metal ion binding"/>
    <property type="evidence" value="ECO:0007669"/>
    <property type="project" value="UniProtKB-KW"/>
</dbReference>
<dbReference type="GO" id="GO:0005212">
    <property type="term" value="F:structural constituent of eye lens"/>
    <property type="evidence" value="ECO:0007669"/>
    <property type="project" value="UniProtKB-KW"/>
</dbReference>
<dbReference type="GO" id="GO:0051082">
    <property type="term" value="F:unfolded protein binding"/>
    <property type="evidence" value="ECO:0007669"/>
    <property type="project" value="TreeGrafter"/>
</dbReference>
<dbReference type="GO" id="GO:0002088">
    <property type="term" value="P:lens development in camera-type eye"/>
    <property type="evidence" value="ECO:0007669"/>
    <property type="project" value="TreeGrafter"/>
</dbReference>
<dbReference type="GO" id="GO:0043066">
    <property type="term" value="P:negative regulation of apoptotic process"/>
    <property type="evidence" value="ECO:0007669"/>
    <property type="project" value="TreeGrafter"/>
</dbReference>
<dbReference type="GO" id="GO:0042026">
    <property type="term" value="P:protein refolding"/>
    <property type="evidence" value="ECO:0007669"/>
    <property type="project" value="TreeGrafter"/>
</dbReference>
<dbReference type="GO" id="GO:0009408">
    <property type="term" value="P:response to heat"/>
    <property type="evidence" value="ECO:0007669"/>
    <property type="project" value="TreeGrafter"/>
</dbReference>
<dbReference type="FunFam" id="2.60.40.790:FF:000008">
    <property type="entry name" value="Alpha-crystallin A chain"/>
    <property type="match status" value="1"/>
</dbReference>
<dbReference type="Gene3D" id="2.60.40.790">
    <property type="match status" value="1"/>
</dbReference>
<dbReference type="InterPro" id="IPR002068">
    <property type="entry name" value="A-crystallin/Hsp20_dom"/>
</dbReference>
<dbReference type="InterPro" id="IPR055269">
    <property type="entry name" value="Alpha-crystallin/HSP_16"/>
</dbReference>
<dbReference type="InterPro" id="IPR001436">
    <property type="entry name" value="Alpha-crystallin/sHSP_animal"/>
</dbReference>
<dbReference type="InterPro" id="IPR003090">
    <property type="entry name" value="Alpha-crystallin_N"/>
</dbReference>
<dbReference type="InterPro" id="IPR008978">
    <property type="entry name" value="HSP20-like_chaperone"/>
</dbReference>
<dbReference type="PANTHER" id="PTHR45640:SF14">
    <property type="entry name" value="ALPHA-CRYSTALLIN A CHAIN"/>
    <property type="match status" value="1"/>
</dbReference>
<dbReference type="PANTHER" id="PTHR45640">
    <property type="entry name" value="HEAT SHOCK PROTEIN HSP-12.2-RELATED"/>
    <property type="match status" value="1"/>
</dbReference>
<dbReference type="Pfam" id="PF00525">
    <property type="entry name" value="Crystallin"/>
    <property type="match status" value="1"/>
</dbReference>
<dbReference type="Pfam" id="PF00011">
    <property type="entry name" value="HSP20"/>
    <property type="match status" value="1"/>
</dbReference>
<dbReference type="PIRSF" id="PIRSF036514">
    <property type="entry name" value="Sm_HSP_B1"/>
    <property type="match status" value="1"/>
</dbReference>
<dbReference type="PRINTS" id="PR00299">
    <property type="entry name" value="ACRYSTALLIN"/>
</dbReference>
<dbReference type="SUPFAM" id="SSF49764">
    <property type="entry name" value="HSP20-like chaperones"/>
    <property type="match status" value="1"/>
</dbReference>
<dbReference type="PROSITE" id="PS01031">
    <property type="entry name" value="SHSP"/>
    <property type="match status" value="1"/>
</dbReference>
<gene>
    <name type="primary">CRYAA</name>
</gene>
<protein>
    <recommendedName>
        <fullName>Alpha-crystallin A chain</fullName>
    </recommendedName>
</protein>
<comment type="function">
    <text evidence="3">Contributes to the transparency and refractive index of the lens. In its oxidized form (absence of intramolecular disulfide bond), acts as a chaperone, preventing aggregation of various proteins under a wide range of stress conditions. Required for the correct formation of lens intermediate filaments as part of a complex composed of BFSP1, BFSP2 and CRYAA.</text>
</comment>
<comment type="subunit">
    <text evidence="2 3">Heteromer composed of three CRYAA and one CRYAB subunits. Inter-subunit bridging via zinc ions enhances stability, which is crucial as there is no protein turn over in the lens. Can also form homodimers and homotetramers (dimers of dimers) which serve as the building blocks of homooligomers (By similarity). Within homooligomers, the zinc-binding motif is created from residues of 3 different molecules. His-100 and Glu-102 from one molecule are ligands of the zinc ion, and His-107 and His-154 residues from additional molecules complete the site with tetrahedral coordination geometry (By similarity). Part of a complex required for lens intermediate filament formation composed of BFSP1, BFSP2 and CRYAA (By similarity).</text>
</comment>
<comment type="subcellular location">
    <subcellularLocation>
        <location evidence="3">Cytoplasm</location>
    </subcellularLocation>
    <subcellularLocation>
        <location evidence="3">Nucleus</location>
    </subcellularLocation>
    <text evidence="3">Translocates to the nucleus during heat shock and resides in sub-nuclear structures known as SC35 speckles or nuclear splicing speckles.</text>
</comment>
<comment type="PTM">
    <text evidence="3">Undergoes age-dependent proteolytical cleavage at the C-terminus.</text>
</comment>
<comment type="similarity">
    <text evidence="4">Belongs to the small heat shock protein (HSP20) family.</text>
</comment>
<feature type="chain" id="PRO_0000125866" description="Alpha-crystallin A chain">
    <location>
        <begin position="1"/>
        <end position="173"/>
    </location>
</feature>
<feature type="domain" description="sHSP" evidence="4">
    <location>
        <begin position="52"/>
        <end position="162"/>
    </location>
</feature>
<feature type="region of interest" description="Required for complex formation with BFSP1 and BFSP2" evidence="3">
    <location>
        <begin position="1"/>
        <end position="63"/>
    </location>
</feature>
<feature type="region of interest" description="Disordered" evidence="5">
    <location>
        <begin position="149"/>
        <end position="173"/>
    </location>
</feature>
<feature type="compositionally biased region" description="Basic and acidic residues" evidence="5">
    <location>
        <begin position="153"/>
        <end position="167"/>
    </location>
</feature>
<feature type="binding site" evidence="2">
    <location>
        <position position="100"/>
    </location>
    <ligand>
        <name>Zn(2+)</name>
        <dbReference type="ChEBI" id="CHEBI:29105"/>
        <label>1</label>
    </ligand>
</feature>
<feature type="binding site" evidence="2">
    <location>
        <position position="102"/>
    </location>
    <ligand>
        <name>Zn(2+)</name>
        <dbReference type="ChEBI" id="CHEBI:29105"/>
        <label>1</label>
    </ligand>
</feature>
<feature type="binding site" evidence="2">
    <location>
        <position position="107"/>
    </location>
    <ligand>
        <name>Zn(2+)</name>
        <dbReference type="ChEBI" id="CHEBI:29105"/>
        <label>2</label>
    </ligand>
</feature>
<feature type="binding site" evidence="2">
    <location>
        <position position="154"/>
    </location>
    <ligand>
        <name>Zn(2+)</name>
        <dbReference type="ChEBI" id="CHEBI:29105"/>
        <label>3</label>
    </ligand>
</feature>
<feature type="modified residue" description="N-acetylmethionine" evidence="6">
    <location>
        <position position="1"/>
    </location>
</feature>
<feature type="modified residue" description="Deamidated glutamine; partial" evidence="1">
    <location>
        <position position="6"/>
    </location>
</feature>
<feature type="modified residue" description="Phosphoserine" evidence="3">
    <location>
        <position position="45"/>
    </location>
</feature>
<feature type="modified residue" description="Deamidated glutamine; partial" evidence="1">
    <location>
        <position position="50"/>
    </location>
</feature>
<feature type="modified residue" description="Deamidated glutamine; partial" evidence="1">
    <location>
        <position position="90"/>
    </location>
</feature>
<feature type="modified residue" description="N6-acetyllysine" evidence="3">
    <location>
        <position position="99"/>
    </location>
</feature>
<feature type="modified residue" description="Deamidated asparagine; partial" evidence="1">
    <location>
        <position position="101"/>
    </location>
</feature>
<feature type="modified residue" description="Phosphoserine" evidence="2">
    <location>
        <position position="122"/>
    </location>
</feature>
<feature type="modified residue" description="Deamidated asparagine; partial" evidence="1">
    <location>
        <position position="123"/>
    </location>
</feature>
<feature type="modified residue" description="Deamidated glutamine; partial" evidence="1">
    <location>
        <position position="147"/>
    </location>
</feature>
<feature type="glycosylation site" description="O-linked (GlcNAc) serine" evidence="1">
    <location>
        <position position="162"/>
    </location>
</feature>
<feature type="disulfide bond" evidence="3">
    <location>
        <begin position="131"/>
        <end position="142"/>
    </location>
</feature>